<sequence length="378" mass="42361">MAQQAPTMQIDNLLAQVKVLGSSLNVADRAKVQKSLLDALSHVETPYEHMLRLSGSLACIRFGADIGLFKALVESQEPLTCSYLGEKLNANANILGRILRLLASARLVKQTGLDTFTAEKITQELAAQAMESGAHLLFDIHNRTYQALPDYLCENKSKDVDNMHNGIFQKAFSTDLSCYEYLVHNPKLQGFMQDAMKLNQTEGDWLSVLPMEDEIKRWQASDPDRVLFVDIGGGMGHQCIRLRGKYSDIPGRVVLQDMPITVERIPKPMPHGIEAMPYNFEEPQPIKNAKFYYTRNVLHGLTDSASIAALKNVAAAMGTESLLVIDDLIIPDEGACTQACQLDFVMMASIAGKKRTRDQWEDKRKYNEYKCKRNSQFL</sequence>
<reference key="1">
    <citation type="journal article" date="2007" name="Science">
        <title>The Fusarium graminearum genome reveals a link between localized polymorphism and pathogen specialization.</title>
        <authorList>
            <person name="Cuomo C.A."/>
            <person name="Gueldener U."/>
            <person name="Xu J.-R."/>
            <person name="Trail F."/>
            <person name="Turgeon B.G."/>
            <person name="Di Pietro A."/>
            <person name="Walton J.D."/>
            <person name="Ma L.-J."/>
            <person name="Baker S.E."/>
            <person name="Rep M."/>
            <person name="Adam G."/>
            <person name="Antoniw J."/>
            <person name="Baldwin T."/>
            <person name="Calvo S.E."/>
            <person name="Chang Y.-L."/>
            <person name="DeCaprio D."/>
            <person name="Gale L.R."/>
            <person name="Gnerre S."/>
            <person name="Goswami R.S."/>
            <person name="Hammond-Kosack K."/>
            <person name="Harris L.J."/>
            <person name="Hilburn K."/>
            <person name="Kennell J.C."/>
            <person name="Kroken S."/>
            <person name="Magnuson J.K."/>
            <person name="Mannhaupt G."/>
            <person name="Mauceli E.W."/>
            <person name="Mewes H.-W."/>
            <person name="Mitterbauer R."/>
            <person name="Muehlbauer G."/>
            <person name="Muensterkoetter M."/>
            <person name="Nelson D."/>
            <person name="O'Donnell K."/>
            <person name="Ouellet T."/>
            <person name="Qi W."/>
            <person name="Quesneville H."/>
            <person name="Roncero M.I.G."/>
            <person name="Seong K.-Y."/>
            <person name="Tetko I.V."/>
            <person name="Urban M."/>
            <person name="Waalwijk C."/>
            <person name="Ward T.J."/>
            <person name="Yao J."/>
            <person name="Birren B.W."/>
            <person name="Kistler H.C."/>
        </authorList>
    </citation>
    <scope>NUCLEOTIDE SEQUENCE [LARGE SCALE GENOMIC DNA]</scope>
    <source>
        <strain>ATCC MYA-4620 / CBS 123657 / FGSC 9075 / NRRL 31084 / PH-1</strain>
    </source>
</reference>
<reference key="2">
    <citation type="journal article" date="2010" name="Nature">
        <title>Comparative genomics reveals mobile pathogenicity chromosomes in Fusarium.</title>
        <authorList>
            <person name="Ma L.-J."/>
            <person name="van der Does H.C."/>
            <person name="Borkovich K.A."/>
            <person name="Coleman J.J."/>
            <person name="Daboussi M.-J."/>
            <person name="Di Pietro A."/>
            <person name="Dufresne M."/>
            <person name="Freitag M."/>
            <person name="Grabherr M."/>
            <person name="Henrissat B."/>
            <person name="Houterman P.M."/>
            <person name="Kang S."/>
            <person name="Shim W.-B."/>
            <person name="Woloshuk C."/>
            <person name="Xie X."/>
            <person name="Xu J.-R."/>
            <person name="Antoniw J."/>
            <person name="Baker S.E."/>
            <person name="Bluhm B.H."/>
            <person name="Breakspear A."/>
            <person name="Brown D.W."/>
            <person name="Butchko R.A.E."/>
            <person name="Chapman S."/>
            <person name="Coulson R."/>
            <person name="Coutinho P.M."/>
            <person name="Danchin E.G.J."/>
            <person name="Diener A."/>
            <person name="Gale L.R."/>
            <person name="Gardiner D.M."/>
            <person name="Goff S."/>
            <person name="Hammond-Kosack K.E."/>
            <person name="Hilburn K."/>
            <person name="Hua-Van A."/>
            <person name="Jonkers W."/>
            <person name="Kazan K."/>
            <person name="Kodira C.D."/>
            <person name="Koehrsen M."/>
            <person name="Kumar L."/>
            <person name="Lee Y.-H."/>
            <person name="Li L."/>
            <person name="Manners J.M."/>
            <person name="Miranda-Saavedra D."/>
            <person name="Mukherjee M."/>
            <person name="Park G."/>
            <person name="Park J."/>
            <person name="Park S.-Y."/>
            <person name="Proctor R.H."/>
            <person name="Regev A."/>
            <person name="Ruiz-Roldan M.C."/>
            <person name="Sain D."/>
            <person name="Sakthikumar S."/>
            <person name="Sykes S."/>
            <person name="Schwartz D.C."/>
            <person name="Turgeon B.G."/>
            <person name="Wapinski I."/>
            <person name="Yoder O."/>
            <person name="Young S."/>
            <person name="Zeng Q."/>
            <person name="Zhou S."/>
            <person name="Galagan J."/>
            <person name="Cuomo C.A."/>
            <person name="Kistler H.C."/>
            <person name="Rep M."/>
        </authorList>
    </citation>
    <scope>GENOME REANNOTATION</scope>
    <source>
        <strain>ATCC MYA-4620 / CBS 123657 / FGSC 9075 / NRRL 31084 / PH-1</strain>
    </source>
</reference>
<reference key="3">
    <citation type="journal article" date="2015" name="BMC Genomics">
        <title>The completed genome sequence of the pathogenic ascomycete fungus Fusarium graminearum.</title>
        <authorList>
            <person name="King R."/>
            <person name="Urban M."/>
            <person name="Hammond-Kosack M.C.U."/>
            <person name="Hassani-Pak K."/>
            <person name="Hammond-Kosack K.E."/>
        </authorList>
    </citation>
    <scope>NUCLEOTIDE SEQUENCE [LARGE SCALE GENOMIC DNA]</scope>
    <source>
        <strain>ATCC MYA-4620 / CBS 123657 / FGSC 9075 / NRRL 31084 / PH-1</strain>
    </source>
</reference>
<reference key="4">
    <citation type="journal article" date="2020" name="Nat. Commun.">
        <title>Synthetic biology based construction of biological activity-related library of fungal decalin-containing diterpenoid pyrones.</title>
        <authorList>
            <person name="Tsukada K."/>
            <person name="Shinki S."/>
            <person name="Kaneko A."/>
            <person name="Murakami K."/>
            <person name="Irie K."/>
            <person name="Murai M."/>
            <person name="Miyoshi H."/>
            <person name="Dan S."/>
            <person name="Kawaji K."/>
            <person name="Hayashi H."/>
            <person name="Kodama E.N."/>
            <person name="Hori A."/>
            <person name="Salim E."/>
            <person name="Kuraishi T."/>
            <person name="Hirata N."/>
            <person name="Kanda Y."/>
            <person name="Asai T."/>
        </authorList>
    </citation>
    <scope>FUNCTION</scope>
    <scope>CATALYTIC ACTIVITY</scope>
    <scope>PATHWAY</scope>
    <scope>BIOTECHNOLOGY</scope>
</reference>
<name>DPFGI_GIBZE</name>
<protein>
    <recommendedName>
        <fullName evidence="4">O-methyltransferase dpfgI</fullName>
        <ecNumber evidence="3">2.1.1.-</ecNumber>
    </recommendedName>
    <alternativeName>
        <fullName evidence="4">Diterpenoid pyrone biosynthesis cluster protein I</fullName>
    </alternativeName>
</protein>
<proteinExistence type="evidence at protein level"/>
<organism>
    <name type="scientific">Gibberella zeae (strain ATCC MYA-4620 / CBS 123657 / FGSC 9075 / NRRL 31084 / PH-1)</name>
    <name type="common">Wheat head blight fungus</name>
    <name type="synonym">Fusarium graminearum</name>
    <dbReference type="NCBI Taxonomy" id="229533"/>
    <lineage>
        <taxon>Eukaryota</taxon>
        <taxon>Fungi</taxon>
        <taxon>Dikarya</taxon>
        <taxon>Ascomycota</taxon>
        <taxon>Pezizomycotina</taxon>
        <taxon>Sordariomycetes</taxon>
        <taxon>Hypocreomycetidae</taxon>
        <taxon>Hypocreales</taxon>
        <taxon>Nectriaceae</taxon>
        <taxon>Fusarium</taxon>
    </lineage>
</organism>
<feature type="chain" id="PRO_0000451554" description="O-methyltransferase dpfgI">
    <location>
        <begin position="1"/>
        <end position="378"/>
    </location>
</feature>
<feature type="active site" description="Proton acceptor" evidence="2">
    <location>
        <position position="299"/>
    </location>
</feature>
<feature type="binding site" evidence="1">
    <location>
        <begin position="232"/>
        <end position="233"/>
    </location>
    <ligand>
        <name>S-adenosyl-L-methionine</name>
        <dbReference type="ChEBI" id="CHEBI:59789"/>
    </ligand>
</feature>
<feature type="binding site" evidence="2">
    <location>
        <position position="257"/>
    </location>
    <ligand>
        <name>S-adenosyl-L-methionine</name>
        <dbReference type="ChEBI" id="CHEBI:59789"/>
    </ligand>
</feature>
<feature type="binding site" evidence="1">
    <location>
        <begin position="279"/>
        <end position="280"/>
    </location>
    <ligand>
        <name>S-adenosyl-L-methionine</name>
        <dbReference type="ChEBI" id="CHEBI:59789"/>
    </ligand>
</feature>
<feature type="binding site" evidence="1">
    <location>
        <position position="295"/>
    </location>
    <ligand>
        <name>S-adenosyl-L-methionine</name>
        <dbReference type="ChEBI" id="CHEBI:59789"/>
    </ligand>
</feature>
<comment type="function">
    <text evidence="3 6">O-methyltransferase; part of the gene cluster that mediates the biosynthesis of diterpenoid pyrones (PubMed:32286350). The first step of the pathway is the synthesis of the alpha-pyrone moiety by the polyketide synthase dpfgA via condensation of one acetyl-CoA starter unit with 3 malonyl-CoA units and 2 methylations (Probable). The alpha-pyrone is then combined with geranylgeranyl pyrophosphate (GGPP) formed by the GGPP synthase dpfgD through the action of the prenyltransferase dpfgC to yield a linear alpha-pyrone diterpenoid (Probable). Subsequent steps in the diterpenoid pyrone biosynthetic pathway involve the decalin core formation, which is initiated by the epoxidation of the C10-C11 olefin by the FAD-dependent oxidoreductase dpfgE, and is followed by a cyclization cascade catalyzed by the terpene cyclase dpfgB (Probable). The short chain dehydrogenase/reductase dpfgG then oxidizes the 8S hydroxy group to a ketone and the short chain dehydrogenase/reductase dpfgH reduces the ketone to the 8R hydroxy group to yield higginsianin B (PubMed:32286350). Higginsianin B is further methylated by the methyltransferase dpfgI to produce the intermediate named FDDP B (PubMed:32286350). The cytochrome P450 monooxygenase dfgpJ then catalyzes a three-step oxidation at C-27 to generate a carboxylic acid as well as C-26 hydroxylation (PubMed:32286350). Finally, methyltransferase dpfgK methylates the carboxylic acid generated by dpfgJ, yielding the final diterpenoid pyrones from the pathway which were named FDDP D and FDDP E (PubMed:32286350).</text>
</comment>
<comment type="pathway">
    <text evidence="3">Secondary metabolite biosynthesis; terpenoid biosynthesis.</text>
</comment>
<comment type="biotechnology">
    <text evidence="3">Diterpenoid pyrones display various biological activities and FDDP E shows anti-HIV activity (PubMed:32286350). FDDP D and FDDP E show also inhibitory activity of 42-mer-amyloid beta aggregation that is involved in the pathogenesis of Alzheimer's disease (PubMed:32286350).</text>
</comment>
<comment type="similarity">
    <text evidence="5">Belongs to the class I-like SAM-binding methyltransferase superfamily. Cation-independent O-methyltransferase family.</text>
</comment>
<dbReference type="EC" id="2.1.1.-" evidence="3"/>
<dbReference type="EMBL" id="HG970333">
    <property type="protein sequence ID" value="CEF79631.1"/>
    <property type="molecule type" value="Genomic_DNA"/>
</dbReference>
<dbReference type="RefSeq" id="XP_011320984.1">
    <property type="nucleotide sequence ID" value="XM_011322682.1"/>
</dbReference>
<dbReference type="SMR" id="I1RL18"/>
<dbReference type="KEGG" id="fgr:FGSG_04596"/>
<dbReference type="VEuPathDB" id="FungiDB:FGRAMPH1_01G15663"/>
<dbReference type="eggNOG" id="KOG3178">
    <property type="taxonomic scope" value="Eukaryota"/>
</dbReference>
<dbReference type="HOGENOM" id="CLU_005533_5_0_1"/>
<dbReference type="InParanoid" id="I1RL18"/>
<dbReference type="OrthoDB" id="123741at110618"/>
<dbReference type="UniPathway" id="UPA00213"/>
<dbReference type="Proteomes" id="UP000070720">
    <property type="component" value="Chromosome 2"/>
</dbReference>
<dbReference type="GO" id="GO:0008171">
    <property type="term" value="F:O-methyltransferase activity"/>
    <property type="evidence" value="ECO:0007669"/>
    <property type="project" value="InterPro"/>
</dbReference>
<dbReference type="GO" id="GO:0046983">
    <property type="term" value="F:protein dimerization activity"/>
    <property type="evidence" value="ECO:0007669"/>
    <property type="project" value="InterPro"/>
</dbReference>
<dbReference type="GO" id="GO:0032259">
    <property type="term" value="P:methylation"/>
    <property type="evidence" value="ECO:0007669"/>
    <property type="project" value="UniProtKB-KW"/>
</dbReference>
<dbReference type="GO" id="GO:0044550">
    <property type="term" value="P:secondary metabolite biosynthetic process"/>
    <property type="evidence" value="ECO:0007669"/>
    <property type="project" value="UniProtKB-ARBA"/>
</dbReference>
<dbReference type="GO" id="GO:0016114">
    <property type="term" value="P:terpenoid biosynthetic process"/>
    <property type="evidence" value="ECO:0007669"/>
    <property type="project" value="UniProtKB-UniPathway"/>
</dbReference>
<dbReference type="Gene3D" id="3.40.50.150">
    <property type="entry name" value="Vaccinia Virus protein VP39"/>
    <property type="match status" value="1"/>
</dbReference>
<dbReference type="Gene3D" id="1.10.10.10">
    <property type="entry name" value="Winged helix-like DNA-binding domain superfamily/Winged helix DNA-binding domain"/>
    <property type="match status" value="1"/>
</dbReference>
<dbReference type="InterPro" id="IPR016461">
    <property type="entry name" value="COMT-like"/>
</dbReference>
<dbReference type="InterPro" id="IPR001077">
    <property type="entry name" value="O_MeTrfase_dom"/>
</dbReference>
<dbReference type="InterPro" id="IPR012967">
    <property type="entry name" value="Plant_O-MeTrfase_dimerisation"/>
</dbReference>
<dbReference type="InterPro" id="IPR029063">
    <property type="entry name" value="SAM-dependent_MTases_sf"/>
</dbReference>
<dbReference type="InterPro" id="IPR036388">
    <property type="entry name" value="WH-like_DNA-bd_sf"/>
</dbReference>
<dbReference type="InterPro" id="IPR036390">
    <property type="entry name" value="WH_DNA-bd_sf"/>
</dbReference>
<dbReference type="PANTHER" id="PTHR43712:SF4">
    <property type="entry name" value="O-METHYLTRANSFERASE DOMAIN-CONTAINING PROTEIN"/>
    <property type="match status" value="1"/>
</dbReference>
<dbReference type="PANTHER" id="PTHR43712">
    <property type="entry name" value="PUTATIVE (AFU_ORTHOLOGUE AFUA_4G14580)-RELATED"/>
    <property type="match status" value="1"/>
</dbReference>
<dbReference type="Pfam" id="PF08100">
    <property type="entry name" value="Dimerisation"/>
    <property type="match status" value="1"/>
</dbReference>
<dbReference type="Pfam" id="PF00891">
    <property type="entry name" value="Methyltransf_2"/>
    <property type="match status" value="1"/>
</dbReference>
<dbReference type="PIRSF" id="PIRSF005739">
    <property type="entry name" value="O-mtase"/>
    <property type="match status" value="1"/>
</dbReference>
<dbReference type="SUPFAM" id="SSF53335">
    <property type="entry name" value="S-adenosyl-L-methionine-dependent methyltransferases"/>
    <property type="match status" value="1"/>
</dbReference>
<dbReference type="SUPFAM" id="SSF46785">
    <property type="entry name" value="Winged helix' DNA-binding domain"/>
    <property type="match status" value="1"/>
</dbReference>
<dbReference type="PROSITE" id="PS51683">
    <property type="entry name" value="SAM_OMT_II"/>
    <property type="match status" value="1"/>
</dbReference>
<gene>
    <name evidence="4" type="primary">dpfgI</name>
    <name type="ORF">FG04596</name>
    <name type="ORF">FGRAMPH1_01T15663</name>
</gene>
<accession>I1RL18</accession>
<accession>A0A098DNU6</accession>
<evidence type="ECO:0000250" key="1">
    <source>
        <dbReference type="UniProtKB" id="O04385"/>
    </source>
</evidence>
<evidence type="ECO:0000255" key="2">
    <source>
        <dbReference type="PROSITE-ProRule" id="PRU01020"/>
    </source>
</evidence>
<evidence type="ECO:0000269" key="3">
    <source>
    </source>
</evidence>
<evidence type="ECO:0000303" key="4">
    <source>
    </source>
</evidence>
<evidence type="ECO:0000305" key="5"/>
<evidence type="ECO:0000305" key="6">
    <source>
    </source>
</evidence>
<keyword id="KW-0489">Methyltransferase</keyword>
<keyword id="KW-1185">Reference proteome</keyword>
<keyword id="KW-0949">S-adenosyl-L-methionine</keyword>
<keyword id="KW-0808">Transferase</keyword>